<gene>
    <name evidence="1" type="primary">thrS</name>
    <name type="ordered locus">Swoo_2491</name>
</gene>
<accession>B1KG61</accession>
<organism>
    <name type="scientific">Shewanella woodyi (strain ATCC 51908 / MS32)</name>
    <dbReference type="NCBI Taxonomy" id="392500"/>
    <lineage>
        <taxon>Bacteria</taxon>
        <taxon>Pseudomonadati</taxon>
        <taxon>Pseudomonadota</taxon>
        <taxon>Gammaproteobacteria</taxon>
        <taxon>Alteromonadales</taxon>
        <taxon>Shewanellaceae</taxon>
        <taxon>Shewanella</taxon>
    </lineage>
</organism>
<comment type="function">
    <text evidence="1">Catalyzes the attachment of threonine to tRNA(Thr) in a two-step reaction: L-threonine is first activated by ATP to form Thr-AMP and then transferred to the acceptor end of tRNA(Thr). Also edits incorrectly charged L-seryl-tRNA(Thr).</text>
</comment>
<comment type="catalytic activity">
    <reaction evidence="1">
        <text>tRNA(Thr) + L-threonine + ATP = L-threonyl-tRNA(Thr) + AMP + diphosphate + H(+)</text>
        <dbReference type="Rhea" id="RHEA:24624"/>
        <dbReference type="Rhea" id="RHEA-COMP:9670"/>
        <dbReference type="Rhea" id="RHEA-COMP:9704"/>
        <dbReference type="ChEBI" id="CHEBI:15378"/>
        <dbReference type="ChEBI" id="CHEBI:30616"/>
        <dbReference type="ChEBI" id="CHEBI:33019"/>
        <dbReference type="ChEBI" id="CHEBI:57926"/>
        <dbReference type="ChEBI" id="CHEBI:78442"/>
        <dbReference type="ChEBI" id="CHEBI:78534"/>
        <dbReference type="ChEBI" id="CHEBI:456215"/>
        <dbReference type="EC" id="6.1.1.3"/>
    </reaction>
</comment>
<comment type="cofactor">
    <cofactor evidence="1">
        <name>Zn(2+)</name>
        <dbReference type="ChEBI" id="CHEBI:29105"/>
    </cofactor>
    <text evidence="1">Binds 1 zinc ion per subunit.</text>
</comment>
<comment type="subunit">
    <text evidence="1">Homodimer.</text>
</comment>
<comment type="subcellular location">
    <subcellularLocation>
        <location evidence="1">Cytoplasm</location>
    </subcellularLocation>
</comment>
<comment type="similarity">
    <text evidence="1">Belongs to the class-II aminoacyl-tRNA synthetase family.</text>
</comment>
<proteinExistence type="inferred from homology"/>
<sequence>MPVITLPDGSKREFATPVSTLDVAADIGPGLAKACIAGRVNGELKDACDIIDTDSELSIITAKDEEGVEILRHSCAHLLGHAFKQLWPEAKMAIGPVIDNGFYYDIDLDHKLTQEDIDALEKRMVQLAKTNYIVEKRVGSWQVARDTFEARGETYKMEILDENISKDDQPALYHHEEYVDMCRGPHVPNMKFCQHFKLMSVAGAYWRGNSDNKMLQRVYGTAWADKKALKVHLNRLEEAAKRDHRKIGKQLDLYHMQEEAPGMVFWHNDGWSLFLELEKFIRQKLGQYTYQEVKGPLMMDRVLWERSGHWDKYSEAMFTTNSENREYAIKPMNCPGHVQIFNQGLKSYRDLPLRMAEFGCCHRNEPSGSLHGLMRVRGFTQDDAHVFCTEDQVQQEVSACIKMVYDTYETFGFKDIVVKLSTRPEKRIGDDDMWDRAEEALKQALTANDIAYEILPGEGAFYGPKIEFTLHDCLDRAWQCGTVQLDYALPGRLGATYVAEDNSRQTPVMIHRAILGSLERFLGILIEEYAGKFPTWLAPMQAVVMNITDKQSDYVDEVVNILKENGIRASKDLRNEKIGFKIREHTLRRVPYLLVVGDQEMENKEVAVRTRDGVDLGKIQISEFASKIKEQISLRSLNLLEE</sequence>
<name>SYT_SHEWM</name>
<feature type="chain" id="PRO_1000098613" description="Threonine--tRNA ligase">
    <location>
        <begin position="1"/>
        <end position="642"/>
    </location>
</feature>
<feature type="domain" description="TGS" evidence="2">
    <location>
        <begin position="1"/>
        <end position="61"/>
    </location>
</feature>
<feature type="region of interest" description="Catalytic" evidence="1">
    <location>
        <begin position="243"/>
        <end position="534"/>
    </location>
</feature>
<feature type="binding site" evidence="1">
    <location>
        <position position="334"/>
    </location>
    <ligand>
        <name>Zn(2+)</name>
        <dbReference type="ChEBI" id="CHEBI:29105"/>
    </ligand>
</feature>
<feature type="binding site" evidence="1">
    <location>
        <position position="385"/>
    </location>
    <ligand>
        <name>Zn(2+)</name>
        <dbReference type="ChEBI" id="CHEBI:29105"/>
    </ligand>
</feature>
<feature type="binding site" evidence="1">
    <location>
        <position position="511"/>
    </location>
    <ligand>
        <name>Zn(2+)</name>
        <dbReference type="ChEBI" id="CHEBI:29105"/>
    </ligand>
</feature>
<dbReference type="EC" id="6.1.1.3" evidence="1"/>
<dbReference type="EMBL" id="CP000961">
    <property type="protein sequence ID" value="ACA86768.1"/>
    <property type="molecule type" value="Genomic_DNA"/>
</dbReference>
<dbReference type="RefSeq" id="WP_012325109.1">
    <property type="nucleotide sequence ID" value="NC_010506.1"/>
</dbReference>
<dbReference type="SMR" id="B1KG61"/>
<dbReference type="STRING" id="392500.Swoo_2491"/>
<dbReference type="KEGG" id="swd:Swoo_2491"/>
<dbReference type="eggNOG" id="COG0441">
    <property type="taxonomic scope" value="Bacteria"/>
</dbReference>
<dbReference type="HOGENOM" id="CLU_008554_0_1_6"/>
<dbReference type="Proteomes" id="UP000002168">
    <property type="component" value="Chromosome"/>
</dbReference>
<dbReference type="GO" id="GO:0005829">
    <property type="term" value="C:cytosol"/>
    <property type="evidence" value="ECO:0007669"/>
    <property type="project" value="TreeGrafter"/>
</dbReference>
<dbReference type="GO" id="GO:0005524">
    <property type="term" value="F:ATP binding"/>
    <property type="evidence" value="ECO:0007669"/>
    <property type="project" value="UniProtKB-UniRule"/>
</dbReference>
<dbReference type="GO" id="GO:0046872">
    <property type="term" value="F:metal ion binding"/>
    <property type="evidence" value="ECO:0007669"/>
    <property type="project" value="UniProtKB-KW"/>
</dbReference>
<dbReference type="GO" id="GO:0004829">
    <property type="term" value="F:threonine-tRNA ligase activity"/>
    <property type="evidence" value="ECO:0007669"/>
    <property type="project" value="UniProtKB-UniRule"/>
</dbReference>
<dbReference type="GO" id="GO:0000049">
    <property type="term" value="F:tRNA binding"/>
    <property type="evidence" value="ECO:0007669"/>
    <property type="project" value="UniProtKB-KW"/>
</dbReference>
<dbReference type="GO" id="GO:0006435">
    <property type="term" value="P:threonyl-tRNA aminoacylation"/>
    <property type="evidence" value="ECO:0007669"/>
    <property type="project" value="UniProtKB-UniRule"/>
</dbReference>
<dbReference type="CDD" id="cd01667">
    <property type="entry name" value="TGS_ThrRS"/>
    <property type="match status" value="1"/>
</dbReference>
<dbReference type="CDD" id="cd00860">
    <property type="entry name" value="ThrRS_anticodon"/>
    <property type="match status" value="1"/>
</dbReference>
<dbReference type="CDD" id="cd00771">
    <property type="entry name" value="ThrRS_core"/>
    <property type="match status" value="1"/>
</dbReference>
<dbReference type="FunFam" id="3.10.20.30:FF:000005">
    <property type="entry name" value="Threonine--tRNA ligase"/>
    <property type="match status" value="1"/>
</dbReference>
<dbReference type="FunFam" id="3.30.54.20:FF:000002">
    <property type="entry name" value="Threonine--tRNA ligase"/>
    <property type="match status" value="1"/>
</dbReference>
<dbReference type="FunFam" id="3.30.930.10:FF:000002">
    <property type="entry name" value="Threonine--tRNA ligase"/>
    <property type="match status" value="1"/>
</dbReference>
<dbReference type="FunFam" id="3.40.50.800:FF:000001">
    <property type="entry name" value="Threonine--tRNA ligase"/>
    <property type="match status" value="1"/>
</dbReference>
<dbReference type="FunFam" id="3.30.980.10:FF:000005">
    <property type="entry name" value="Threonyl-tRNA synthetase, mitochondrial"/>
    <property type="match status" value="1"/>
</dbReference>
<dbReference type="Gene3D" id="3.10.20.30">
    <property type="match status" value="1"/>
</dbReference>
<dbReference type="Gene3D" id="3.30.54.20">
    <property type="match status" value="1"/>
</dbReference>
<dbReference type="Gene3D" id="3.40.50.800">
    <property type="entry name" value="Anticodon-binding domain"/>
    <property type="match status" value="1"/>
</dbReference>
<dbReference type="Gene3D" id="3.30.930.10">
    <property type="entry name" value="Bira Bifunctional Protein, Domain 2"/>
    <property type="match status" value="1"/>
</dbReference>
<dbReference type="Gene3D" id="3.30.980.10">
    <property type="entry name" value="Threonyl-trna Synthetase, Chain A, domain 2"/>
    <property type="match status" value="1"/>
</dbReference>
<dbReference type="HAMAP" id="MF_00184">
    <property type="entry name" value="Thr_tRNA_synth"/>
    <property type="match status" value="1"/>
</dbReference>
<dbReference type="InterPro" id="IPR002314">
    <property type="entry name" value="aa-tRNA-synt_IIb"/>
</dbReference>
<dbReference type="InterPro" id="IPR006195">
    <property type="entry name" value="aa-tRNA-synth_II"/>
</dbReference>
<dbReference type="InterPro" id="IPR045864">
    <property type="entry name" value="aa-tRNA-synth_II/BPL/LPL"/>
</dbReference>
<dbReference type="InterPro" id="IPR004154">
    <property type="entry name" value="Anticodon-bd"/>
</dbReference>
<dbReference type="InterPro" id="IPR036621">
    <property type="entry name" value="Anticodon-bd_dom_sf"/>
</dbReference>
<dbReference type="InterPro" id="IPR012675">
    <property type="entry name" value="Beta-grasp_dom_sf"/>
</dbReference>
<dbReference type="InterPro" id="IPR004095">
    <property type="entry name" value="TGS"/>
</dbReference>
<dbReference type="InterPro" id="IPR012676">
    <property type="entry name" value="TGS-like"/>
</dbReference>
<dbReference type="InterPro" id="IPR002320">
    <property type="entry name" value="Thr-tRNA-ligase_IIa"/>
</dbReference>
<dbReference type="InterPro" id="IPR018163">
    <property type="entry name" value="Thr/Ala-tRNA-synth_IIc_edit"/>
</dbReference>
<dbReference type="InterPro" id="IPR047246">
    <property type="entry name" value="ThrRS_anticodon"/>
</dbReference>
<dbReference type="InterPro" id="IPR033728">
    <property type="entry name" value="ThrRS_core"/>
</dbReference>
<dbReference type="InterPro" id="IPR012947">
    <property type="entry name" value="tRNA_SAD"/>
</dbReference>
<dbReference type="NCBIfam" id="TIGR00418">
    <property type="entry name" value="thrS"/>
    <property type="match status" value="1"/>
</dbReference>
<dbReference type="PANTHER" id="PTHR11451:SF44">
    <property type="entry name" value="THREONINE--TRNA LIGASE, CHLOROPLASTIC_MITOCHONDRIAL 2"/>
    <property type="match status" value="1"/>
</dbReference>
<dbReference type="PANTHER" id="PTHR11451">
    <property type="entry name" value="THREONINE-TRNA LIGASE"/>
    <property type="match status" value="1"/>
</dbReference>
<dbReference type="Pfam" id="PF03129">
    <property type="entry name" value="HGTP_anticodon"/>
    <property type="match status" value="1"/>
</dbReference>
<dbReference type="Pfam" id="PF02824">
    <property type="entry name" value="TGS"/>
    <property type="match status" value="1"/>
</dbReference>
<dbReference type="Pfam" id="PF00587">
    <property type="entry name" value="tRNA-synt_2b"/>
    <property type="match status" value="1"/>
</dbReference>
<dbReference type="Pfam" id="PF07973">
    <property type="entry name" value="tRNA_SAD"/>
    <property type="match status" value="1"/>
</dbReference>
<dbReference type="PRINTS" id="PR01047">
    <property type="entry name" value="TRNASYNTHTHR"/>
</dbReference>
<dbReference type="SMART" id="SM00863">
    <property type="entry name" value="tRNA_SAD"/>
    <property type="match status" value="1"/>
</dbReference>
<dbReference type="SUPFAM" id="SSF52954">
    <property type="entry name" value="Class II aaRS ABD-related"/>
    <property type="match status" value="1"/>
</dbReference>
<dbReference type="SUPFAM" id="SSF55681">
    <property type="entry name" value="Class II aaRS and biotin synthetases"/>
    <property type="match status" value="1"/>
</dbReference>
<dbReference type="SUPFAM" id="SSF81271">
    <property type="entry name" value="TGS-like"/>
    <property type="match status" value="1"/>
</dbReference>
<dbReference type="SUPFAM" id="SSF55186">
    <property type="entry name" value="ThrRS/AlaRS common domain"/>
    <property type="match status" value="1"/>
</dbReference>
<dbReference type="PROSITE" id="PS50862">
    <property type="entry name" value="AA_TRNA_LIGASE_II"/>
    <property type="match status" value="1"/>
</dbReference>
<dbReference type="PROSITE" id="PS51880">
    <property type="entry name" value="TGS"/>
    <property type="match status" value="1"/>
</dbReference>
<evidence type="ECO:0000255" key="1">
    <source>
        <dbReference type="HAMAP-Rule" id="MF_00184"/>
    </source>
</evidence>
<evidence type="ECO:0000255" key="2">
    <source>
        <dbReference type="PROSITE-ProRule" id="PRU01228"/>
    </source>
</evidence>
<keyword id="KW-0030">Aminoacyl-tRNA synthetase</keyword>
<keyword id="KW-0067">ATP-binding</keyword>
<keyword id="KW-0963">Cytoplasm</keyword>
<keyword id="KW-0436">Ligase</keyword>
<keyword id="KW-0479">Metal-binding</keyword>
<keyword id="KW-0547">Nucleotide-binding</keyword>
<keyword id="KW-0648">Protein biosynthesis</keyword>
<keyword id="KW-1185">Reference proteome</keyword>
<keyword id="KW-0694">RNA-binding</keyword>
<keyword id="KW-0820">tRNA-binding</keyword>
<keyword id="KW-0862">Zinc</keyword>
<reference key="1">
    <citation type="submission" date="2008-02" db="EMBL/GenBank/DDBJ databases">
        <title>Complete sequence of Shewanella woodyi ATCC 51908.</title>
        <authorList>
            <consortium name="US DOE Joint Genome Institute"/>
            <person name="Copeland A."/>
            <person name="Lucas S."/>
            <person name="Lapidus A."/>
            <person name="Glavina del Rio T."/>
            <person name="Dalin E."/>
            <person name="Tice H."/>
            <person name="Bruce D."/>
            <person name="Goodwin L."/>
            <person name="Pitluck S."/>
            <person name="Sims D."/>
            <person name="Brettin T."/>
            <person name="Detter J.C."/>
            <person name="Han C."/>
            <person name="Kuske C.R."/>
            <person name="Schmutz J."/>
            <person name="Larimer F."/>
            <person name="Land M."/>
            <person name="Hauser L."/>
            <person name="Kyrpides N."/>
            <person name="Lykidis A."/>
            <person name="Zhao J.-S."/>
            <person name="Richardson P."/>
        </authorList>
    </citation>
    <scope>NUCLEOTIDE SEQUENCE [LARGE SCALE GENOMIC DNA]</scope>
    <source>
        <strain>ATCC 51908 / MS32</strain>
    </source>
</reference>
<protein>
    <recommendedName>
        <fullName evidence="1">Threonine--tRNA ligase</fullName>
        <ecNumber evidence="1">6.1.1.3</ecNumber>
    </recommendedName>
    <alternativeName>
        <fullName evidence="1">Threonyl-tRNA synthetase</fullName>
        <shortName evidence="1">ThrRS</shortName>
    </alternativeName>
</protein>